<proteinExistence type="inferred from homology"/>
<dbReference type="EC" id="5.3.1.24" evidence="1"/>
<dbReference type="EMBL" id="AM884176">
    <property type="protein sequence ID" value="CAP04020.1"/>
    <property type="molecule type" value="Genomic_DNA"/>
</dbReference>
<dbReference type="RefSeq" id="WP_009873729.1">
    <property type="nucleotide sequence ID" value="NC_010287.1"/>
</dbReference>
<dbReference type="RefSeq" id="YP_001654655.1">
    <property type="nucleotide sequence ID" value="NC_010287.1"/>
</dbReference>
<dbReference type="SMR" id="B0B7P4"/>
<dbReference type="KEGG" id="ctb:CTL0581"/>
<dbReference type="PATRIC" id="fig|471472.4.peg.625"/>
<dbReference type="HOGENOM" id="CLU_076364_1_0_0"/>
<dbReference type="BioCyc" id="MetaCyc:MONOMER-18791"/>
<dbReference type="BRENDA" id="4.2.1.160">
    <property type="organism ID" value="1315"/>
</dbReference>
<dbReference type="BRENDA" id="5.3.1.24">
    <property type="organism ID" value="1315"/>
</dbReference>
<dbReference type="UniPathway" id="UPA00035">
    <property type="reaction ID" value="UER00042"/>
</dbReference>
<dbReference type="Proteomes" id="UP001154402">
    <property type="component" value="Chromosome"/>
</dbReference>
<dbReference type="GO" id="GO:0004640">
    <property type="term" value="F:phosphoribosylanthranilate isomerase activity"/>
    <property type="evidence" value="ECO:0007669"/>
    <property type="project" value="UniProtKB-UniRule"/>
</dbReference>
<dbReference type="GO" id="GO:0000162">
    <property type="term" value="P:L-tryptophan biosynthetic process"/>
    <property type="evidence" value="ECO:0007669"/>
    <property type="project" value="UniProtKB-UniRule"/>
</dbReference>
<dbReference type="CDD" id="cd00405">
    <property type="entry name" value="PRAI"/>
    <property type="match status" value="1"/>
</dbReference>
<dbReference type="Gene3D" id="3.20.20.70">
    <property type="entry name" value="Aldolase class I"/>
    <property type="match status" value="1"/>
</dbReference>
<dbReference type="HAMAP" id="MF_00135">
    <property type="entry name" value="PRAI"/>
    <property type="match status" value="1"/>
</dbReference>
<dbReference type="InterPro" id="IPR013785">
    <property type="entry name" value="Aldolase_TIM"/>
</dbReference>
<dbReference type="InterPro" id="IPR001240">
    <property type="entry name" value="PRAI_dom"/>
</dbReference>
<dbReference type="InterPro" id="IPR011060">
    <property type="entry name" value="RibuloseP-bd_barrel"/>
</dbReference>
<dbReference type="InterPro" id="IPR044643">
    <property type="entry name" value="TrpF_fam"/>
</dbReference>
<dbReference type="NCBIfam" id="NF002303">
    <property type="entry name" value="PRK01222.2-3"/>
    <property type="match status" value="1"/>
</dbReference>
<dbReference type="PANTHER" id="PTHR42894">
    <property type="entry name" value="N-(5'-PHOSPHORIBOSYL)ANTHRANILATE ISOMERASE"/>
    <property type="match status" value="1"/>
</dbReference>
<dbReference type="PANTHER" id="PTHR42894:SF1">
    <property type="entry name" value="N-(5'-PHOSPHORIBOSYL)ANTHRANILATE ISOMERASE"/>
    <property type="match status" value="1"/>
</dbReference>
<dbReference type="Pfam" id="PF00697">
    <property type="entry name" value="PRAI"/>
    <property type="match status" value="1"/>
</dbReference>
<dbReference type="SUPFAM" id="SSF51366">
    <property type="entry name" value="Ribulose-phoshate binding barrel"/>
    <property type="match status" value="1"/>
</dbReference>
<accession>B0B7P4</accession>
<name>TRPF_CHLT2</name>
<feature type="chain" id="PRO_1000095917" description="N-(5'-phosphoribosyl)anthranilate isomerase">
    <location>
        <begin position="1"/>
        <end position="208"/>
    </location>
</feature>
<comment type="catalytic activity">
    <reaction evidence="1">
        <text>N-(5-phospho-beta-D-ribosyl)anthranilate = 1-(2-carboxyphenylamino)-1-deoxy-D-ribulose 5-phosphate</text>
        <dbReference type="Rhea" id="RHEA:21540"/>
        <dbReference type="ChEBI" id="CHEBI:18277"/>
        <dbReference type="ChEBI" id="CHEBI:58613"/>
        <dbReference type="EC" id="5.3.1.24"/>
    </reaction>
</comment>
<comment type="pathway">
    <text evidence="1">Amino-acid biosynthesis; L-tryptophan biosynthesis; L-tryptophan from chorismate: step 3/5.</text>
</comment>
<comment type="similarity">
    <text evidence="1">Belongs to the TrpF family.</text>
</comment>
<sequence length="208" mass="22789">MKVKICGITHPDDAREAAKAGADYIGMIFAKDSRRCVSEEKAKYIVEAIQEGNSEPVGVFPEHSVEEILAITEATGITSIQLSGEDILFKFSQLREHFSIFYVVSVYSNGQPSAALPPMNDAVTVVYDHIGGERGSPFDWKAFSPFQHNNWMLGGGVNLWNIKEGISLLNPRGIDVSSGVERPGILRKDIFLMQALINSAKELSSSTL</sequence>
<keyword id="KW-0028">Amino-acid biosynthesis</keyword>
<keyword id="KW-0057">Aromatic amino acid biosynthesis</keyword>
<keyword id="KW-0413">Isomerase</keyword>
<keyword id="KW-0822">Tryptophan biosynthesis</keyword>
<reference key="1">
    <citation type="journal article" date="2008" name="Genome Res.">
        <title>Chlamydia trachomatis: genome sequence analysis of lymphogranuloma venereum isolates.</title>
        <authorList>
            <person name="Thomson N.R."/>
            <person name="Holden M.T.G."/>
            <person name="Carder C."/>
            <person name="Lennard N."/>
            <person name="Lockey S.J."/>
            <person name="Marsh P."/>
            <person name="Skipp P."/>
            <person name="O'Connor C.D."/>
            <person name="Goodhead I."/>
            <person name="Norbertzcak H."/>
            <person name="Harris B."/>
            <person name="Ormond D."/>
            <person name="Rance R."/>
            <person name="Quail M.A."/>
            <person name="Parkhill J."/>
            <person name="Stephens R.S."/>
            <person name="Clarke I.N."/>
        </authorList>
    </citation>
    <scope>NUCLEOTIDE SEQUENCE [LARGE SCALE GENOMIC DNA]</scope>
    <source>
        <strain>ATCC VR-902B / DSM 19102 / 434/Bu</strain>
    </source>
</reference>
<organism>
    <name type="scientific">Chlamydia trachomatis serovar L2 (strain ATCC VR-902B / DSM 19102 / 434/Bu)</name>
    <dbReference type="NCBI Taxonomy" id="471472"/>
    <lineage>
        <taxon>Bacteria</taxon>
        <taxon>Pseudomonadati</taxon>
        <taxon>Chlamydiota</taxon>
        <taxon>Chlamydiia</taxon>
        <taxon>Chlamydiales</taxon>
        <taxon>Chlamydiaceae</taxon>
        <taxon>Chlamydia/Chlamydophila group</taxon>
        <taxon>Chlamydia</taxon>
    </lineage>
</organism>
<protein>
    <recommendedName>
        <fullName evidence="1">N-(5'-phosphoribosyl)anthranilate isomerase</fullName>
        <shortName evidence="1">PRAI</shortName>
        <ecNumber evidence="1">5.3.1.24</ecNumber>
    </recommendedName>
</protein>
<gene>
    <name evidence="1" type="primary">trpF</name>
    <name type="ordered locus">CTL0581</name>
</gene>
<evidence type="ECO:0000255" key="1">
    <source>
        <dbReference type="HAMAP-Rule" id="MF_00135"/>
    </source>
</evidence>